<keyword id="KW-0002">3D-structure</keyword>
<keyword id="KW-0210">Decarboxylase</keyword>
<keyword id="KW-0456">Lyase</keyword>
<keyword id="KW-0663">Pyridoxal phosphate</keyword>
<keyword id="KW-1185">Reference proteome</keyword>
<comment type="function">
    <text evidence="3">Catalyzes the decarboxylation of L-aspartate, 3-sulfino-L-alanine (cysteine sulfinic acid), and L-cysteate to beta-alanine, hypotaurine and taurine, respectively. The preferred substrate is 3-sulfino-L-alanine. Does not exhibit any decarboxylation activity toward glutamate.</text>
</comment>
<comment type="catalytic activity">
    <reaction evidence="3">
        <text>L-aspartate + H(+) = beta-alanine + CO2</text>
        <dbReference type="Rhea" id="RHEA:19497"/>
        <dbReference type="ChEBI" id="CHEBI:15378"/>
        <dbReference type="ChEBI" id="CHEBI:16526"/>
        <dbReference type="ChEBI" id="CHEBI:29991"/>
        <dbReference type="ChEBI" id="CHEBI:57966"/>
        <dbReference type="EC" id="4.1.1.11"/>
    </reaction>
</comment>
<comment type="catalytic activity">
    <reaction evidence="3">
        <text>3-sulfino-L-alanine + H(+) = hypotaurine + CO2</text>
        <dbReference type="Rhea" id="RHEA:16877"/>
        <dbReference type="ChEBI" id="CHEBI:15378"/>
        <dbReference type="ChEBI" id="CHEBI:16526"/>
        <dbReference type="ChEBI" id="CHEBI:57853"/>
        <dbReference type="ChEBI" id="CHEBI:61085"/>
        <dbReference type="EC" id="4.1.1.29"/>
    </reaction>
</comment>
<comment type="catalytic activity">
    <reaction evidence="3">
        <text>L-cysteate + H(+) = taurine + CO2</text>
        <dbReference type="Rhea" id="RHEA:25221"/>
        <dbReference type="ChEBI" id="CHEBI:15378"/>
        <dbReference type="ChEBI" id="CHEBI:16526"/>
        <dbReference type="ChEBI" id="CHEBI:58090"/>
        <dbReference type="ChEBI" id="CHEBI:507393"/>
        <dbReference type="EC" id="4.1.1.29"/>
    </reaction>
</comment>
<comment type="cofactor">
    <cofactor evidence="1">
        <name>pyridoxal 5'-phosphate</name>
        <dbReference type="ChEBI" id="CHEBI:597326"/>
    </cofactor>
</comment>
<comment type="activity regulation">
    <text evidence="3">Activated by Mn(2+). Inhibited by bis-carboxymethyl-trithiocarbonate, ethylxanthogenacetic acid and 2,5-disulfoaniline. Not affected by Li(+) within 0.05-40 mM concentration range.</text>
</comment>
<comment type="biophysicochemical properties">
    <kinetics>
        <KM evidence="3">0.2 mM for 3-sulfino-L-alanine (cysteine sulfinic acid)</KM>
        <KM evidence="3">93 mM for L-aspartate</KM>
        <Vmax evidence="3">7.22 umol/min/mg enzyme with 3-sulfino-L-alanine (cysteine sulfinic acid) as substrate</Vmax>
        <Vmax evidence="3">0.16 umol/min/mg enzyme with L-aspartate as substrate</Vmax>
        <text evidence="3">kcat is 6.6 sec(-1) with 3-sulfino-L-alanine (cysteine sulfinic acid) as substrate. kcat is 0.14 sec(-1) with L-aspartate as substrate.</text>
    </kinetics>
</comment>
<comment type="pathway">
    <text>Organosulfur biosynthesis; taurine biosynthesis; hypotaurine from L-cysteine: step 2/2.</text>
</comment>
<comment type="subunit">
    <text evidence="3">Homodimer.</text>
</comment>
<comment type="tissue specificity">
    <text evidence="2 3">Expressed in kidney and liver not detected in lymphoid tissues and lung. Expressed in kidney, liver and brain. 7 and 4 times higher expression in kidney and liver than in brain, respectively. Low level of detection in skeletal muscle. Expressed in brain, olfactory bulb, liver, skeletal muscle and kidney with the highest expression in liver and lowest in skeletal muscle (at protein level) (PubMed:26327310).</text>
</comment>
<comment type="developmental stage">
    <text evidence="3">Expression in the brain decreases with age as detected from 17 dpc to 12 months.</text>
</comment>
<comment type="similarity">
    <text evidence="6">Belongs to the group II decarboxylase family.</text>
</comment>
<reference key="1">
    <citation type="journal article" date="2002" name="Biochim. Biophys. Acta">
        <title>Cloning of murine cysteine sulfinic acid decarboxylase and its mRNA expression in murine tissues.</title>
        <authorList>
            <person name="Park E."/>
            <person name="Park S.Y."/>
            <person name="Wang C."/>
            <person name="Xu J."/>
            <person name="LaFauci G."/>
            <person name="Schuller-Levis G."/>
        </authorList>
    </citation>
    <scope>NUCLEOTIDE SEQUENCE [MRNA]</scope>
    <scope>TISSUE SPECIFICITY</scope>
</reference>
<reference key="2">
    <citation type="journal article" date="2005" name="Science">
        <title>The transcriptional landscape of the mammalian genome.</title>
        <authorList>
            <person name="Carninci P."/>
            <person name="Kasukawa T."/>
            <person name="Katayama S."/>
            <person name="Gough J."/>
            <person name="Frith M.C."/>
            <person name="Maeda N."/>
            <person name="Oyama R."/>
            <person name="Ravasi T."/>
            <person name="Lenhard B."/>
            <person name="Wells C."/>
            <person name="Kodzius R."/>
            <person name="Shimokawa K."/>
            <person name="Bajic V.B."/>
            <person name="Brenner S.E."/>
            <person name="Batalov S."/>
            <person name="Forrest A.R."/>
            <person name="Zavolan M."/>
            <person name="Davis M.J."/>
            <person name="Wilming L.G."/>
            <person name="Aidinis V."/>
            <person name="Allen J.E."/>
            <person name="Ambesi-Impiombato A."/>
            <person name="Apweiler R."/>
            <person name="Aturaliya R.N."/>
            <person name="Bailey T.L."/>
            <person name="Bansal M."/>
            <person name="Baxter L."/>
            <person name="Beisel K.W."/>
            <person name="Bersano T."/>
            <person name="Bono H."/>
            <person name="Chalk A.M."/>
            <person name="Chiu K.P."/>
            <person name="Choudhary V."/>
            <person name="Christoffels A."/>
            <person name="Clutterbuck D.R."/>
            <person name="Crowe M.L."/>
            <person name="Dalla E."/>
            <person name="Dalrymple B.P."/>
            <person name="de Bono B."/>
            <person name="Della Gatta G."/>
            <person name="di Bernardo D."/>
            <person name="Down T."/>
            <person name="Engstrom P."/>
            <person name="Fagiolini M."/>
            <person name="Faulkner G."/>
            <person name="Fletcher C.F."/>
            <person name="Fukushima T."/>
            <person name="Furuno M."/>
            <person name="Futaki S."/>
            <person name="Gariboldi M."/>
            <person name="Georgii-Hemming P."/>
            <person name="Gingeras T.R."/>
            <person name="Gojobori T."/>
            <person name="Green R.E."/>
            <person name="Gustincich S."/>
            <person name="Harbers M."/>
            <person name="Hayashi Y."/>
            <person name="Hensch T.K."/>
            <person name="Hirokawa N."/>
            <person name="Hill D."/>
            <person name="Huminiecki L."/>
            <person name="Iacono M."/>
            <person name="Ikeo K."/>
            <person name="Iwama A."/>
            <person name="Ishikawa T."/>
            <person name="Jakt M."/>
            <person name="Kanapin A."/>
            <person name="Katoh M."/>
            <person name="Kawasawa Y."/>
            <person name="Kelso J."/>
            <person name="Kitamura H."/>
            <person name="Kitano H."/>
            <person name="Kollias G."/>
            <person name="Krishnan S.P."/>
            <person name="Kruger A."/>
            <person name="Kummerfeld S.K."/>
            <person name="Kurochkin I.V."/>
            <person name="Lareau L.F."/>
            <person name="Lazarevic D."/>
            <person name="Lipovich L."/>
            <person name="Liu J."/>
            <person name="Liuni S."/>
            <person name="McWilliam S."/>
            <person name="Madan Babu M."/>
            <person name="Madera M."/>
            <person name="Marchionni L."/>
            <person name="Matsuda H."/>
            <person name="Matsuzawa S."/>
            <person name="Miki H."/>
            <person name="Mignone F."/>
            <person name="Miyake S."/>
            <person name="Morris K."/>
            <person name="Mottagui-Tabar S."/>
            <person name="Mulder N."/>
            <person name="Nakano N."/>
            <person name="Nakauchi H."/>
            <person name="Ng P."/>
            <person name="Nilsson R."/>
            <person name="Nishiguchi S."/>
            <person name="Nishikawa S."/>
            <person name="Nori F."/>
            <person name="Ohara O."/>
            <person name="Okazaki Y."/>
            <person name="Orlando V."/>
            <person name="Pang K.C."/>
            <person name="Pavan W.J."/>
            <person name="Pavesi G."/>
            <person name="Pesole G."/>
            <person name="Petrovsky N."/>
            <person name="Piazza S."/>
            <person name="Reed J."/>
            <person name="Reid J.F."/>
            <person name="Ring B.Z."/>
            <person name="Ringwald M."/>
            <person name="Rost B."/>
            <person name="Ruan Y."/>
            <person name="Salzberg S.L."/>
            <person name="Sandelin A."/>
            <person name="Schneider C."/>
            <person name="Schoenbach C."/>
            <person name="Sekiguchi K."/>
            <person name="Semple C.A."/>
            <person name="Seno S."/>
            <person name="Sessa L."/>
            <person name="Sheng Y."/>
            <person name="Shibata Y."/>
            <person name="Shimada H."/>
            <person name="Shimada K."/>
            <person name="Silva D."/>
            <person name="Sinclair B."/>
            <person name="Sperling S."/>
            <person name="Stupka E."/>
            <person name="Sugiura K."/>
            <person name="Sultana R."/>
            <person name="Takenaka Y."/>
            <person name="Taki K."/>
            <person name="Tammoja K."/>
            <person name="Tan S.L."/>
            <person name="Tang S."/>
            <person name="Taylor M.S."/>
            <person name="Tegner J."/>
            <person name="Teichmann S.A."/>
            <person name="Ueda H.R."/>
            <person name="van Nimwegen E."/>
            <person name="Verardo R."/>
            <person name="Wei C.L."/>
            <person name="Yagi K."/>
            <person name="Yamanishi H."/>
            <person name="Zabarovsky E."/>
            <person name="Zhu S."/>
            <person name="Zimmer A."/>
            <person name="Hide W."/>
            <person name="Bult C."/>
            <person name="Grimmond S.M."/>
            <person name="Teasdale R.D."/>
            <person name="Liu E.T."/>
            <person name="Brusic V."/>
            <person name="Quackenbush J."/>
            <person name="Wahlestedt C."/>
            <person name="Mattick J.S."/>
            <person name="Hume D.A."/>
            <person name="Kai C."/>
            <person name="Sasaki D."/>
            <person name="Tomaru Y."/>
            <person name="Fukuda S."/>
            <person name="Kanamori-Katayama M."/>
            <person name="Suzuki M."/>
            <person name="Aoki J."/>
            <person name="Arakawa T."/>
            <person name="Iida J."/>
            <person name="Imamura K."/>
            <person name="Itoh M."/>
            <person name="Kato T."/>
            <person name="Kawaji H."/>
            <person name="Kawagashira N."/>
            <person name="Kawashima T."/>
            <person name="Kojima M."/>
            <person name="Kondo S."/>
            <person name="Konno H."/>
            <person name="Nakano K."/>
            <person name="Ninomiya N."/>
            <person name="Nishio T."/>
            <person name="Okada M."/>
            <person name="Plessy C."/>
            <person name="Shibata K."/>
            <person name="Shiraki T."/>
            <person name="Suzuki S."/>
            <person name="Tagami M."/>
            <person name="Waki K."/>
            <person name="Watahiki A."/>
            <person name="Okamura-Oho Y."/>
            <person name="Suzuki H."/>
            <person name="Kawai J."/>
            <person name="Hayashizaki Y."/>
        </authorList>
    </citation>
    <scope>NUCLEOTIDE SEQUENCE [LARGE SCALE MRNA]</scope>
    <source>
        <strain>C57BL/6J</strain>
        <tissue>Liver</tissue>
    </source>
</reference>
<reference key="3">
    <citation type="journal article" date="2010" name="Cell">
        <title>A tissue-specific atlas of mouse protein phosphorylation and expression.</title>
        <authorList>
            <person name="Huttlin E.L."/>
            <person name="Jedrychowski M.P."/>
            <person name="Elias J.E."/>
            <person name="Goswami T."/>
            <person name="Rad R."/>
            <person name="Beausoleil S.A."/>
            <person name="Villen J."/>
            <person name="Haas W."/>
            <person name="Sowa M.E."/>
            <person name="Gygi S.P."/>
        </authorList>
    </citation>
    <scope>IDENTIFICATION BY MASS SPECTROMETRY [LARGE SCALE ANALYSIS]</scope>
    <source>
        <tissue>Brown adipose tissue</tissue>
        <tissue>Kidney</tissue>
        <tissue>Liver</tissue>
        <tissue>Lung</tissue>
        <tissue>Pancreas</tissue>
        <tissue>Spleen</tissue>
    </source>
</reference>
<reference key="4">
    <citation type="journal article" date="2015" name="Neurochem. Int.">
        <title>Mammalian CSAD and GADL1 have distinct biochemical properties and patterns of brain expression.</title>
        <authorList>
            <person name="Winge I."/>
            <person name="Teigen K."/>
            <person name="Fossbakk A."/>
            <person name="Mahootchi E."/>
            <person name="Kleppe R."/>
            <person name="Skoeldberg F."/>
            <person name="Kaempe O."/>
            <person name="Haavik J."/>
        </authorList>
    </citation>
    <scope>FUNCTION</scope>
    <scope>CATALYTIC ACTIVITY</scope>
    <scope>ACTIVITY REGULATION</scope>
    <scope>BIOPHYSICOCHEMICAL PROPERTIES</scope>
    <scope>SUBSTRATE SPECIFICITY</scope>
    <scope>SUBUNIT</scope>
    <scope>TISSUE SPECIFICITY</scope>
    <scope>DEVELOPMENTAL STAGE</scope>
</reference>
<gene>
    <name evidence="5" type="primary">Csad</name>
</gene>
<organism>
    <name type="scientific">Mus musculus</name>
    <name type="common">Mouse</name>
    <dbReference type="NCBI Taxonomy" id="10090"/>
    <lineage>
        <taxon>Eukaryota</taxon>
        <taxon>Metazoa</taxon>
        <taxon>Chordata</taxon>
        <taxon>Craniata</taxon>
        <taxon>Vertebrata</taxon>
        <taxon>Euteleostomi</taxon>
        <taxon>Mammalia</taxon>
        <taxon>Eutheria</taxon>
        <taxon>Euarchontoglires</taxon>
        <taxon>Glires</taxon>
        <taxon>Rodentia</taxon>
        <taxon>Myomorpha</taxon>
        <taxon>Muroidea</taxon>
        <taxon>Muridae</taxon>
        <taxon>Murinae</taxon>
        <taxon>Mus</taxon>
        <taxon>Mus</taxon>
    </lineage>
</organism>
<proteinExistence type="evidence at protein level"/>
<protein>
    <recommendedName>
        <fullName evidence="4">Cysteine sulfinic acid decarboxylase</fullName>
        <ecNumber evidence="3">4.1.1.29</ecNumber>
    </recommendedName>
    <alternativeName>
        <fullName evidence="7">Aspartate 1-decarboxylase</fullName>
        <ecNumber evidence="3">4.1.1.11</ecNumber>
    </alternativeName>
    <alternativeName>
        <fullName>Cysteine-sulfinate decarboxylase</fullName>
    </alternativeName>
    <alternativeName>
        <fullName>Sulfinoalanine decarboxylase</fullName>
    </alternativeName>
</protein>
<accession>Q9DBE0</accession>
<accession>Q8K566</accession>
<evidence type="ECO:0000250" key="1"/>
<evidence type="ECO:0000269" key="2">
    <source>
    </source>
</evidence>
<evidence type="ECO:0000269" key="3">
    <source>
    </source>
</evidence>
<evidence type="ECO:0000303" key="4">
    <source>
    </source>
</evidence>
<evidence type="ECO:0000303" key="5">
    <source>
    </source>
</evidence>
<evidence type="ECO:0000305" key="6"/>
<evidence type="ECO:0000305" key="7">
    <source>
    </source>
</evidence>
<evidence type="ECO:0007829" key="8">
    <source>
        <dbReference type="PDB" id="6ZEK"/>
    </source>
</evidence>
<evidence type="ECO:0007829" key="9">
    <source>
        <dbReference type="PDB" id="7A0A"/>
    </source>
</evidence>
<name>CSAD_MOUSE</name>
<feature type="chain" id="PRO_0000147007" description="Cysteine sulfinic acid decarboxylase">
    <location>
        <begin position="1"/>
        <end position="493"/>
    </location>
</feature>
<feature type="modified residue" description="N6-(pyridoxal phosphate)lysine" evidence="1">
    <location>
        <position position="305"/>
    </location>
</feature>
<feature type="sequence conflict" description="In Ref. 1; AAK60398." evidence="6" ref="1">
    <original>M</original>
    <variation>I</variation>
    <location>
        <position position="160"/>
    </location>
</feature>
<feature type="helix" evidence="8">
    <location>
        <begin position="14"/>
        <end position="31"/>
    </location>
</feature>
<feature type="turn" evidence="8">
    <location>
        <begin position="32"/>
        <end position="34"/>
    </location>
</feature>
<feature type="helix" evidence="8">
    <location>
        <begin position="35"/>
        <end position="37"/>
    </location>
</feature>
<feature type="helix" evidence="8">
    <location>
        <begin position="49"/>
        <end position="56"/>
    </location>
</feature>
<feature type="helix" evidence="8">
    <location>
        <begin position="67"/>
        <end position="80"/>
    </location>
</feature>
<feature type="strand" evidence="8">
    <location>
        <begin position="89"/>
        <end position="93"/>
    </location>
</feature>
<feature type="helix" evidence="8">
    <location>
        <begin position="99"/>
        <end position="111"/>
    </location>
</feature>
<feature type="turn" evidence="8">
    <location>
        <begin position="118"/>
        <end position="120"/>
    </location>
</feature>
<feature type="helix" evidence="8">
    <location>
        <begin position="122"/>
        <end position="139"/>
    </location>
</feature>
<feature type="strand" evidence="8">
    <location>
        <begin position="145"/>
        <end position="151"/>
    </location>
</feature>
<feature type="helix" evidence="8">
    <location>
        <begin position="152"/>
        <end position="167"/>
    </location>
</feature>
<feature type="helix" evidence="8">
    <location>
        <begin position="171"/>
        <end position="174"/>
    </location>
</feature>
<feature type="helix" evidence="8">
    <location>
        <begin position="176"/>
        <end position="178"/>
    </location>
</feature>
<feature type="strand" evidence="8">
    <location>
        <begin position="182"/>
        <end position="187"/>
    </location>
</feature>
<feature type="helix" evidence="8">
    <location>
        <begin position="193"/>
        <end position="200"/>
    </location>
</feature>
<feature type="helix" evidence="8">
    <location>
        <begin position="205"/>
        <end position="207"/>
    </location>
</feature>
<feature type="strand" evidence="8">
    <location>
        <begin position="208"/>
        <end position="211"/>
    </location>
</feature>
<feature type="helix" evidence="8">
    <location>
        <begin position="221"/>
        <end position="233"/>
    </location>
</feature>
<feature type="strand" evidence="8">
    <location>
        <begin position="237"/>
        <end position="246"/>
    </location>
</feature>
<feature type="turn" evidence="8">
    <location>
        <begin position="248"/>
        <end position="250"/>
    </location>
</feature>
<feature type="helix" evidence="8">
    <location>
        <begin position="256"/>
        <end position="266"/>
    </location>
</feature>
<feature type="strand" evidence="8">
    <location>
        <begin position="269"/>
        <end position="273"/>
    </location>
</feature>
<feature type="helix" evidence="8">
    <location>
        <begin position="277"/>
        <end position="282"/>
    </location>
</feature>
<feature type="turn" evidence="8">
    <location>
        <begin position="284"/>
        <end position="286"/>
    </location>
</feature>
<feature type="helix" evidence="8">
    <location>
        <begin position="287"/>
        <end position="290"/>
    </location>
</feature>
<feature type="helix" evidence="8">
    <location>
        <begin position="293"/>
        <end position="295"/>
    </location>
</feature>
<feature type="strand" evidence="8">
    <location>
        <begin position="297"/>
        <end position="301"/>
    </location>
</feature>
<feature type="turn" evidence="9">
    <location>
        <begin position="303"/>
        <end position="306"/>
    </location>
</feature>
<feature type="strand" evidence="8">
    <location>
        <begin position="314"/>
        <end position="318"/>
    </location>
</feature>
<feature type="helix" evidence="8">
    <location>
        <begin position="324"/>
        <end position="329"/>
    </location>
</feature>
<feature type="helix" evidence="8">
    <location>
        <begin position="345"/>
        <end position="347"/>
    </location>
</feature>
<feature type="helix" evidence="8">
    <location>
        <begin position="350"/>
        <end position="352"/>
    </location>
</feature>
<feature type="helix" evidence="8">
    <location>
        <begin position="362"/>
        <end position="397"/>
    </location>
</feature>
<feature type="strand" evidence="8">
    <location>
        <begin position="401"/>
        <end position="405"/>
    </location>
</feature>
<feature type="strand" evidence="8">
    <location>
        <begin position="408"/>
        <end position="416"/>
    </location>
</feature>
<feature type="helix" evidence="8">
    <location>
        <begin position="419"/>
        <end position="421"/>
    </location>
</feature>
<feature type="helix" evidence="8">
    <location>
        <begin position="430"/>
        <end position="434"/>
    </location>
</feature>
<feature type="helix" evidence="8">
    <location>
        <begin position="437"/>
        <end position="448"/>
    </location>
</feature>
<feature type="strand" evidence="8">
    <location>
        <begin position="452"/>
        <end position="456"/>
    </location>
</feature>
<feature type="strand" evidence="8">
    <location>
        <begin position="464"/>
        <end position="468"/>
    </location>
</feature>
<feature type="helix" evidence="8">
    <location>
        <begin position="476"/>
        <end position="490"/>
    </location>
</feature>
<sequence length="493" mass="55145">MADSKPLRTLDGDPVAVEALLQDVFGIVVDEAILKGTSASEKVCEWKEPEELKQLLDLELQSQGESREQILERCRTVIHYSVKTGHPRFFNQLFSGLDPHALAGRIITESLNTSQYTYEIAPVFVLMEEEVLKKLRALVGWNSGDGVFCPGGSISNMYAMNLARFQRYPDCKQRGLRALPPLALFTSKECHYSITKGAAFLGLGTDSVRVVKADERGRMIPEDLERQIILAEAEGSVPFLVSATSGTTVLGAFDPLDAIADVCQRHGLWFHVDAAWGGSVLLSRTHRHLLDGIQRADSVAWNPHKLLAAGLQCSALLLRDTSNLLKRCHGSQASYLFQQDKFYDVALDTGDKVVQCGRRVDCLKLWLMWKAQGGQGLERRIDQAFALTRYLVEEIKKREGFELVMEPEFVNVCFWFVPPSLRGKKESPDYSQRLSQVAPVLKERMVKKGTMMIGYQPHGTRANFFRMVVANPILAQADIDFLLGELELLGQDL</sequence>
<dbReference type="EC" id="4.1.1.29" evidence="3"/>
<dbReference type="EC" id="4.1.1.11" evidence="3"/>
<dbReference type="EMBL" id="AY033912">
    <property type="protein sequence ID" value="AAK60398.1"/>
    <property type="molecule type" value="mRNA"/>
</dbReference>
<dbReference type="EMBL" id="AK005015">
    <property type="protein sequence ID" value="BAB23747.1"/>
    <property type="molecule type" value="mRNA"/>
</dbReference>
<dbReference type="CCDS" id="CCDS27873.1"/>
<dbReference type="RefSeq" id="NP_001346055.1">
    <property type="nucleotide sequence ID" value="NM_001359126.2"/>
</dbReference>
<dbReference type="RefSeq" id="NP_001403380.1">
    <property type="nucleotide sequence ID" value="NM_001416451.1"/>
</dbReference>
<dbReference type="RefSeq" id="NP_001403381.1">
    <property type="nucleotide sequence ID" value="NM_001416452.1"/>
</dbReference>
<dbReference type="RefSeq" id="NP_001403382.1">
    <property type="nucleotide sequence ID" value="NM_001416453.1"/>
</dbReference>
<dbReference type="RefSeq" id="NP_001403383.1">
    <property type="nucleotide sequence ID" value="NM_001416454.1"/>
</dbReference>
<dbReference type="RefSeq" id="NP_001403384.1">
    <property type="nucleotide sequence ID" value="NM_001416455.1"/>
</dbReference>
<dbReference type="RefSeq" id="NP_001403385.1">
    <property type="nucleotide sequence ID" value="NM_001416456.1"/>
</dbReference>
<dbReference type="RefSeq" id="NP_001403386.1">
    <property type="nucleotide sequence ID" value="NM_001416457.1"/>
</dbReference>
<dbReference type="RefSeq" id="NP_001403387.1">
    <property type="nucleotide sequence ID" value="NM_001416458.1"/>
</dbReference>
<dbReference type="RefSeq" id="NP_001403388.1">
    <property type="nucleotide sequence ID" value="NM_001416459.1"/>
</dbReference>
<dbReference type="RefSeq" id="NP_001403389.1">
    <property type="nucleotide sequence ID" value="NM_001416460.1"/>
</dbReference>
<dbReference type="RefSeq" id="NP_001403390.1">
    <property type="nucleotide sequence ID" value="NM_001416461.1"/>
</dbReference>
<dbReference type="RefSeq" id="NP_001403391.1">
    <property type="nucleotide sequence ID" value="NM_001416462.1"/>
</dbReference>
<dbReference type="RefSeq" id="NP_659191.1">
    <property type="nucleotide sequence ID" value="NM_144942.4"/>
</dbReference>
<dbReference type="RefSeq" id="XP_006521062.1">
    <property type="nucleotide sequence ID" value="XM_006520999.3"/>
</dbReference>
<dbReference type="RefSeq" id="XP_036015310.1">
    <property type="nucleotide sequence ID" value="XM_036159417.1"/>
</dbReference>
<dbReference type="RefSeq" id="XP_036015312.1">
    <property type="nucleotide sequence ID" value="XM_036159419.1"/>
</dbReference>
<dbReference type="RefSeq" id="XP_036015314.1">
    <property type="nucleotide sequence ID" value="XM_036159421.1"/>
</dbReference>
<dbReference type="PDB" id="6ZEK">
    <property type="method" value="X-ray"/>
    <property type="resolution" value="2.10 A"/>
    <property type="chains" value="A/B/C/D=1-493"/>
</dbReference>
<dbReference type="PDB" id="7A0A">
    <property type="method" value="X-ray"/>
    <property type="resolution" value="2.80 A"/>
    <property type="chains" value="A/B/C/D=1-493"/>
</dbReference>
<dbReference type="PDBsum" id="6ZEK"/>
<dbReference type="PDBsum" id="7A0A"/>
<dbReference type="SASBDB" id="Q9DBE0"/>
<dbReference type="SMR" id="Q9DBE0"/>
<dbReference type="BioGRID" id="232920">
    <property type="interactions" value="2"/>
</dbReference>
<dbReference type="FunCoup" id="Q9DBE0">
    <property type="interactions" value="367"/>
</dbReference>
<dbReference type="STRING" id="10090.ENSMUSP00000023805"/>
<dbReference type="GlyGen" id="Q9DBE0">
    <property type="glycosylation" value="1 site, 1 O-linked glycan (1 site)"/>
</dbReference>
<dbReference type="iPTMnet" id="Q9DBE0"/>
<dbReference type="PhosphoSitePlus" id="Q9DBE0"/>
<dbReference type="SwissPalm" id="Q9DBE0"/>
<dbReference type="jPOST" id="Q9DBE0"/>
<dbReference type="PaxDb" id="10090-ENSMUSP00000023805"/>
<dbReference type="PeptideAtlas" id="Q9DBE0"/>
<dbReference type="ProteomicsDB" id="279068"/>
<dbReference type="Pumba" id="Q9DBE0"/>
<dbReference type="Antibodypedia" id="26909">
    <property type="antibodies" value="182 antibodies from 25 providers"/>
</dbReference>
<dbReference type="DNASU" id="246277"/>
<dbReference type="Ensembl" id="ENSMUST00000023805.3">
    <property type="protein sequence ID" value="ENSMUSP00000023805.2"/>
    <property type="gene ID" value="ENSMUSG00000023044.3"/>
</dbReference>
<dbReference type="GeneID" id="246277"/>
<dbReference type="KEGG" id="mmu:246277"/>
<dbReference type="UCSC" id="uc007xuu.1">
    <property type="organism name" value="mouse"/>
</dbReference>
<dbReference type="AGR" id="MGI:2180098"/>
<dbReference type="CTD" id="51380"/>
<dbReference type="MGI" id="MGI:2180098">
    <property type="gene designation" value="Csad"/>
</dbReference>
<dbReference type="VEuPathDB" id="HostDB:ENSMUSG00000023044"/>
<dbReference type="eggNOG" id="KOG0629">
    <property type="taxonomic scope" value="Eukaryota"/>
</dbReference>
<dbReference type="GeneTree" id="ENSGT00940000158240"/>
<dbReference type="HOGENOM" id="CLU_011856_0_0_1"/>
<dbReference type="InParanoid" id="Q9DBE0"/>
<dbReference type="OMA" id="CVDLHKW"/>
<dbReference type="OrthoDB" id="392571at2759"/>
<dbReference type="PhylomeDB" id="Q9DBE0"/>
<dbReference type="TreeFam" id="TF314688"/>
<dbReference type="BRENDA" id="4.1.1.29">
    <property type="organism ID" value="3474"/>
</dbReference>
<dbReference type="UniPathway" id="UPA00012">
    <property type="reaction ID" value="UER00538"/>
</dbReference>
<dbReference type="BioGRID-ORCS" id="246277">
    <property type="hits" value="0 hits in 78 CRISPR screens"/>
</dbReference>
<dbReference type="ChiTaRS" id="Csad">
    <property type="organism name" value="mouse"/>
</dbReference>
<dbReference type="PRO" id="PR:Q9DBE0"/>
<dbReference type="Proteomes" id="UP000000589">
    <property type="component" value="Chromosome 15"/>
</dbReference>
<dbReference type="RNAct" id="Q9DBE0">
    <property type="molecule type" value="protein"/>
</dbReference>
<dbReference type="Bgee" id="ENSMUSG00000023044">
    <property type="expression patterns" value="Expressed in right kidney and 261 other cell types or tissues"/>
</dbReference>
<dbReference type="ExpressionAtlas" id="Q9DBE0">
    <property type="expression patterns" value="baseline and differential"/>
</dbReference>
<dbReference type="GO" id="GO:0005737">
    <property type="term" value="C:cytoplasm"/>
    <property type="evidence" value="ECO:0000250"/>
    <property type="project" value="UniProtKB"/>
</dbReference>
<dbReference type="GO" id="GO:0004068">
    <property type="term" value="F:aspartate 1-decarboxylase activity"/>
    <property type="evidence" value="ECO:0007669"/>
    <property type="project" value="UniProtKB-EC"/>
</dbReference>
<dbReference type="GO" id="GO:0016831">
    <property type="term" value="F:carboxy-lyase activity"/>
    <property type="evidence" value="ECO:0000304"/>
    <property type="project" value="MGI"/>
</dbReference>
<dbReference type="GO" id="GO:0030170">
    <property type="term" value="F:pyridoxal phosphate binding"/>
    <property type="evidence" value="ECO:0007669"/>
    <property type="project" value="InterPro"/>
</dbReference>
<dbReference type="GO" id="GO:0004782">
    <property type="term" value="F:sulfinoalanine decarboxylase activity"/>
    <property type="evidence" value="ECO:0000250"/>
    <property type="project" value="UniProtKB"/>
</dbReference>
<dbReference type="GO" id="GO:0019449">
    <property type="term" value="P:L-cysteine catabolic process to hypotaurine"/>
    <property type="evidence" value="ECO:0000250"/>
    <property type="project" value="UniProtKB"/>
</dbReference>
<dbReference type="GO" id="GO:0019452">
    <property type="term" value="P:L-cysteine catabolic process to taurine"/>
    <property type="evidence" value="ECO:0000250"/>
    <property type="project" value="UniProtKB"/>
</dbReference>
<dbReference type="GO" id="GO:0042412">
    <property type="term" value="P:taurine biosynthetic process"/>
    <property type="evidence" value="ECO:0000315"/>
    <property type="project" value="MGI"/>
</dbReference>
<dbReference type="GO" id="GO:0019530">
    <property type="term" value="P:taurine metabolic process"/>
    <property type="evidence" value="ECO:0000304"/>
    <property type="project" value="MGI"/>
</dbReference>
<dbReference type="CDD" id="cd06450">
    <property type="entry name" value="DOPA_deC_like"/>
    <property type="match status" value="1"/>
</dbReference>
<dbReference type="FunFam" id="3.40.640.10:FF:000016">
    <property type="entry name" value="Glutamate decarboxylase like 1"/>
    <property type="match status" value="1"/>
</dbReference>
<dbReference type="Gene3D" id="3.90.1150.170">
    <property type="match status" value="1"/>
</dbReference>
<dbReference type="Gene3D" id="3.40.640.10">
    <property type="entry name" value="Type I PLP-dependent aspartate aminotransferase-like (Major domain)"/>
    <property type="match status" value="1"/>
</dbReference>
<dbReference type="InterPro" id="IPR002129">
    <property type="entry name" value="PyrdxlP-dep_de-COase"/>
</dbReference>
<dbReference type="InterPro" id="IPR015424">
    <property type="entry name" value="PyrdxlP-dep_Trfase"/>
</dbReference>
<dbReference type="InterPro" id="IPR015421">
    <property type="entry name" value="PyrdxlP-dep_Trfase_major"/>
</dbReference>
<dbReference type="InterPro" id="IPR021115">
    <property type="entry name" value="Pyridoxal-P_BS"/>
</dbReference>
<dbReference type="PANTHER" id="PTHR45677:SF8">
    <property type="entry name" value="CYSTEINE SULFINIC ACID DECARBOXYLASE"/>
    <property type="match status" value="1"/>
</dbReference>
<dbReference type="PANTHER" id="PTHR45677">
    <property type="entry name" value="GLUTAMATE DECARBOXYLASE-RELATED"/>
    <property type="match status" value="1"/>
</dbReference>
<dbReference type="Pfam" id="PF00282">
    <property type="entry name" value="Pyridoxal_deC"/>
    <property type="match status" value="1"/>
</dbReference>
<dbReference type="SUPFAM" id="SSF53383">
    <property type="entry name" value="PLP-dependent transferases"/>
    <property type="match status" value="1"/>
</dbReference>
<dbReference type="PROSITE" id="PS00392">
    <property type="entry name" value="DDC_GAD_HDC_YDC"/>
    <property type="match status" value="1"/>
</dbReference>